<sequence length="145" mass="15537">MAKKITGYIRLQIKAGEANPSPPVGPALGQHGVNIREFCESFNTATKNIEKGLPTPVIITVYADRTFSFITKTPPASILLKKFVLKGKSGSARPNTEKVGKATRQQLEEIAKMKTPDLTAADLEAAIRTIAGTARSMGIDVEGVE</sequence>
<comment type="function">
    <text evidence="1">Forms part of the ribosomal stalk which helps the ribosome interact with GTP-bound translation factors.</text>
</comment>
<comment type="subunit">
    <text evidence="1">Part of the ribosomal stalk of the 50S ribosomal subunit. Interacts with L10 and the large rRNA to form the base of the stalk. L10 forms an elongated spine to which L12 dimers bind in a sequential fashion forming a multimeric L10(L12)X complex.</text>
</comment>
<comment type="PTM">
    <text evidence="1">One or more lysine residues are methylated.</text>
</comment>
<comment type="similarity">
    <text evidence="1">Belongs to the universal ribosomal protein uL11 family.</text>
</comment>
<evidence type="ECO:0000255" key="1">
    <source>
        <dbReference type="HAMAP-Rule" id="MF_00736"/>
    </source>
</evidence>
<evidence type="ECO:0000305" key="2"/>
<gene>
    <name evidence="1" type="primary">rplK</name>
    <name type="ordered locus">CBUD_1866</name>
</gene>
<name>RL11_COXBN</name>
<protein>
    <recommendedName>
        <fullName evidence="1">Large ribosomal subunit protein uL11</fullName>
    </recommendedName>
    <alternativeName>
        <fullName evidence="2">50S ribosomal protein L11</fullName>
    </alternativeName>
</protein>
<reference key="1">
    <citation type="journal article" date="2009" name="Infect. Immun.">
        <title>Comparative genomics reveal extensive transposon-mediated genomic plasticity and diversity among potential effector proteins within the genus Coxiella.</title>
        <authorList>
            <person name="Beare P.A."/>
            <person name="Unsworth N."/>
            <person name="Andoh M."/>
            <person name="Voth D.E."/>
            <person name="Omsland A."/>
            <person name="Gilk S.D."/>
            <person name="Williams K.P."/>
            <person name="Sobral B.W."/>
            <person name="Kupko J.J. III"/>
            <person name="Porcella S.F."/>
            <person name="Samuel J.E."/>
            <person name="Heinzen R.A."/>
        </authorList>
    </citation>
    <scope>NUCLEOTIDE SEQUENCE [LARGE SCALE GENOMIC DNA]</scope>
    <source>
        <strain>Dugway 5J108-111</strain>
    </source>
</reference>
<accession>A9KD43</accession>
<feature type="chain" id="PRO_1000083377" description="Large ribosomal subunit protein uL11">
    <location>
        <begin position="1"/>
        <end position="145"/>
    </location>
</feature>
<keyword id="KW-0488">Methylation</keyword>
<keyword id="KW-0687">Ribonucleoprotein</keyword>
<keyword id="KW-0689">Ribosomal protein</keyword>
<keyword id="KW-0694">RNA-binding</keyword>
<keyword id="KW-0699">rRNA-binding</keyword>
<organism>
    <name type="scientific">Coxiella burnetii (strain Dugway 5J108-111)</name>
    <dbReference type="NCBI Taxonomy" id="434922"/>
    <lineage>
        <taxon>Bacteria</taxon>
        <taxon>Pseudomonadati</taxon>
        <taxon>Pseudomonadota</taxon>
        <taxon>Gammaproteobacteria</taxon>
        <taxon>Legionellales</taxon>
        <taxon>Coxiellaceae</taxon>
        <taxon>Coxiella</taxon>
    </lineage>
</organism>
<dbReference type="EMBL" id="CP000733">
    <property type="protein sequence ID" value="ABS78210.1"/>
    <property type="molecule type" value="Genomic_DNA"/>
</dbReference>
<dbReference type="RefSeq" id="WP_011997295.1">
    <property type="nucleotide sequence ID" value="NC_009727.1"/>
</dbReference>
<dbReference type="SMR" id="A9KD43"/>
<dbReference type="KEGG" id="cbd:CBUD_1866"/>
<dbReference type="HOGENOM" id="CLU_074237_2_0_6"/>
<dbReference type="Proteomes" id="UP000008555">
    <property type="component" value="Chromosome"/>
</dbReference>
<dbReference type="GO" id="GO:0022625">
    <property type="term" value="C:cytosolic large ribosomal subunit"/>
    <property type="evidence" value="ECO:0007669"/>
    <property type="project" value="TreeGrafter"/>
</dbReference>
<dbReference type="GO" id="GO:0070180">
    <property type="term" value="F:large ribosomal subunit rRNA binding"/>
    <property type="evidence" value="ECO:0007669"/>
    <property type="project" value="UniProtKB-UniRule"/>
</dbReference>
<dbReference type="GO" id="GO:0003735">
    <property type="term" value="F:structural constituent of ribosome"/>
    <property type="evidence" value="ECO:0007669"/>
    <property type="project" value="InterPro"/>
</dbReference>
<dbReference type="GO" id="GO:0006412">
    <property type="term" value="P:translation"/>
    <property type="evidence" value="ECO:0007669"/>
    <property type="project" value="UniProtKB-UniRule"/>
</dbReference>
<dbReference type="CDD" id="cd00349">
    <property type="entry name" value="Ribosomal_L11"/>
    <property type="match status" value="1"/>
</dbReference>
<dbReference type="FunFam" id="1.10.10.250:FF:000001">
    <property type="entry name" value="50S ribosomal protein L11"/>
    <property type="match status" value="1"/>
</dbReference>
<dbReference type="FunFam" id="3.30.1550.10:FF:000013">
    <property type="entry name" value="50S ribosomal protein L11"/>
    <property type="match status" value="1"/>
</dbReference>
<dbReference type="Gene3D" id="1.10.10.250">
    <property type="entry name" value="Ribosomal protein L11, C-terminal domain"/>
    <property type="match status" value="1"/>
</dbReference>
<dbReference type="Gene3D" id="3.30.1550.10">
    <property type="entry name" value="Ribosomal protein L11/L12, N-terminal domain"/>
    <property type="match status" value="1"/>
</dbReference>
<dbReference type="HAMAP" id="MF_00736">
    <property type="entry name" value="Ribosomal_uL11"/>
    <property type="match status" value="1"/>
</dbReference>
<dbReference type="InterPro" id="IPR000911">
    <property type="entry name" value="Ribosomal_uL11"/>
</dbReference>
<dbReference type="InterPro" id="IPR006519">
    <property type="entry name" value="Ribosomal_uL11_bac-typ"/>
</dbReference>
<dbReference type="InterPro" id="IPR020783">
    <property type="entry name" value="Ribosomal_uL11_C"/>
</dbReference>
<dbReference type="InterPro" id="IPR036769">
    <property type="entry name" value="Ribosomal_uL11_C_sf"/>
</dbReference>
<dbReference type="InterPro" id="IPR020785">
    <property type="entry name" value="Ribosomal_uL11_CS"/>
</dbReference>
<dbReference type="InterPro" id="IPR020784">
    <property type="entry name" value="Ribosomal_uL11_N"/>
</dbReference>
<dbReference type="InterPro" id="IPR036796">
    <property type="entry name" value="Ribosomal_uL11_N_sf"/>
</dbReference>
<dbReference type="NCBIfam" id="TIGR01632">
    <property type="entry name" value="L11_bact"/>
    <property type="match status" value="1"/>
</dbReference>
<dbReference type="PANTHER" id="PTHR11661">
    <property type="entry name" value="60S RIBOSOMAL PROTEIN L12"/>
    <property type="match status" value="1"/>
</dbReference>
<dbReference type="PANTHER" id="PTHR11661:SF1">
    <property type="entry name" value="LARGE RIBOSOMAL SUBUNIT PROTEIN UL11M"/>
    <property type="match status" value="1"/>
</dbReference>
<dbReference type="Pfam" id="PF00298">
    <property type="entry name" value="Ribosomal_L11"/>
    <property type="match status" value="1"/>
</dbReference>
<dbReference type="Pfam" id="PF03946">
    <property type="entry name" value="Ribosomal_L11_N"/>
    <property type="match status" value="1"/>
</dbReference>
<dbReference type="SMART" id="SM00649">
    <property type="entry name" value="RL11"/>
    <property type="match status" value="1"/>
</dbReference>
<dbReference type="SUPFAM" id="SSF54747">
    <property type="entry name" value="Ribosomal L11/L12e N-terminal domain"/>
    <property type="match status" value="1"/>
</dbReference>
<dbReference type="SUPFAM" id="SSF46906">
    <property type="entry name" value="Ribosomal protein L11, C-terminal domain"/>
    <property type="match status" value="1"/>
</dbReference>
<dbReference type="PROSITE" id="PS00359">
    <property type="entry name" value="RIBOSOMAL_L11"/>
    <property type="match status" value="1"/>
</dbReference>
<proteinExistence type="inferred from homology"/>